<evidence type="ECO:0000255" key="1">
    <source>
        <dbReference type="HAMAP-Rule" id="MF_00222"/>
    </source>
</evidence>
<sequence>MKKFAVFGNPIAQSLSPTIHQMFADQVGEKISYEKILAPEDGFVEAAKAFLAQEGAVGCNVTMPFKLDAFNLAKVDDQAAKDAQAVNTLMNGDRGELLGFNTDGVGLVNDLLNSGVKIKDKHVLLIGAGGAARGVISPLLKAGAATLTIANRTKAKAEEVASAASNPKVDVVALEDIATIAPHIIINSTAASLSNALPCSLNDGVLQHCEVVYDMVYKNSPTRFMRDAAELGVKTQIDGLGMLVEQAAEAFYIWTQKRPDTSDIVKRVRDIVEQSEKRN</sequence>
<comment type="function">
    <text evidence="1">Involved in the biosynthesis of the chorismate, which leads to the biosynthesis of aromatic amino acids. Catalyzes the reversible NADPH linked reduction of 3-dehydroshikimate (DHSA) to yield shikimate (SA).</text>
</comment>
<comment type="catalytic activity">
    <reaction evidence="1">
        <text>shikimate + NADP(+) = 3-dehydroshikimate + NADPH + H(+)</text>
        <dbReference type="Rhea" id="RHEA:17737"/>
        <dbReference type="ChEBI" id="CHEBI:15378"/>
        <dbReference type="ChEBI" id="CHEBI:16630"/>
        <dbReference type="ChEBI" id="CHEBI:36208"/>
        <dbReference type="ChEBI" id="CHEBI:57783"/>
        <dbReference type="ChEBI" id="CHEBI:58349"/>
        <dbReference type="EC" id="1.1.1.25"/>
    </reaction>
</comment>
<comment type="pathway">
    <text evidence="1">Metabolic intermediate biosynthesis; chorismate biosynthesis; chorismate from D-erythrose 4-phosphate and phosphoenolpyruvate: step 4/7.</text>
</comment>
<comment type="subunit">
    <text evidence="1">Homodimer.</text>
</comment>
<comment type="similarity">
    <text evidence="1">Belongs to the shikimate dehydrogenase family.</text>
</comment>
<feature type="chain" id="PRO_1000100102" description="Shikimate dehydrogenase (NADP(+))">
    <location>
        <begin position="1"/>
        <end position="279"/>
    </location>
</feature>
<feature type="active site" description="Proton acceptor" evidence="1">
    <location>
        <position position="66"/>
    </location>
</feature>
<feature type="binding site" evidence="1">
    <location>
        <begin position="14"/>
        <end position="16"/>
    </location>
    <ligand>
        <name>shikimate</name>
        <dbReference type="ChEBI" id="CHEBI:36208"/>
    </ligand>
</feature>
<feature type="binding site" evidence="1">
    <location>
        <position position="62"/>
    </location>
    <ligand>
        <name>shikimate</name>
        <dbReference type="ChEBI" id="CHEBI:36208"/>
    </ligand>
</feature>
<feature type="binding site" evidence="1">
    <location>
        <position position="87"/>
    </location>
    <ligand>
        <name>shikimate</name>
        <dbReference type="ChEBI" id="CHEBI:36208"/>
    </ligand>
</feature>
<feature type="binding site" evidence="1">
    <location>
        <position position="103"/>
    </location>
    <ligand>
        <name>shikimate</name>
        <dbReference type="ChEBI" id="CHEBI:36208"/>
    </ligand>
</feature>
<feature type="binding site" evidence="1">
    <location>
        <begin position="127"/>
        <end position="131"/>
    </location>
    <ligand>
        <name>NADP(+)</name>
        <dbReference type="ChEBI" id="CHEBI:58349"/>
    </ligand>
</feature>
<feature type="binding site" evidence="1">
    <location>
        <begin position="151"/>
        <end position="156"/>
    </location>
    <ligand>
        <name>NADP(+)</name>
        <dbReference type="ChEBI" id="CHEBI:58349"/>
    </ligand>
</feature>
<feature type="binding site" evidence="1">
    <location>
        <position position="215"/>
    </location>
    <ligand>
        <name>NADP(+)</name>
        <dbReference type="ChEBI" id="CHEBI:58349"/>
    </ligand>
</feature>
<feature type="binding site" evidence="1">
    <location>
        <position position="217"/>
    </location>
    <ligand>
        <name>shikimate</name>
        <dbReference type="ChEBI" id="CHEBI:36208"/>
    </ligand>
</feature>
<feature type="binding site" evidence="1">
    <location>
        <position position="239"/>
    </location>
    <ligand>
        <name>NADP(+)</name>
        <dbReference type="ChEBI" id="CHEBI:58349"/>
    </ligand>
</feature>
<accession>B4S253</accession>
<accession>F2G1T2</accession>
<name>AROE_ALTMD</name>
<keyword id="KW-0028">Amino-acid biosynthesis</keyword>
<keyword id="KW-0057">Aromatic amino acid biosynthesis</keyword>
<keyword id="KW-0521">NADP</keyword>
<keyword id="KW-0560">Oxidoreductase</keyword>
<dbReference type="EC" id="1.1.1.25" evidence="1"/>
<dbReference type="EMBL" id="CP001103">
    <property type="protein sequence ID" value="AEA96179.1"/>
    <property type="molecule type" value="Genomic_DNA"/>
</dbReference>
<dbReference type="RefSeq" id="WP_012516553.1">
    <property type="nucleotide sequence ID" value="NC_011138.3"/>
</dbReference>
<dbReference type="SMR" id="B4S253"/>
<dbReference type="KEGG" id="amc:MADE_1000150"/>
<dbReference type="HOGENOM" id="CLU_044063_2_1_6"/>
<dbReference type="UniPathway" id="UPA00053">
    <property type="reaction ID" value="UER00087"/>
</dbReference>
<dbReference type="Proteomes" id="UP000001870">
    <property type="component" value="Chromosome"/>
</dbReference>
<dbReference type="GO" id="GO:0005829">
    <property type="term" value="C:cytosol"/>
    <property type="evidence" value="ECO:0007669"/>
    <property type="project" value="TreeGrafter"/>
</dbReference>
<dbReference type="GO" id="GO:0050661">
    <property type="term" value="F:NADP binding"/>
    <property type="evidence" value="ECO:0007669"/>
    <property type="project" value="InterPro"/>
</dbReference>
<dbReference type="GO" id="GO:0004764">
    <property type="term" value="F:shikimate 3-dehydrogenase (NADP+) activity"/>
    <property type="evidence" value="ECO:0007669"/>
    <property type="project" value="UniProtKB-UniRule"/>
</dbReference>
<dbReference type="GO" id="GO:0008652">
    <property type="term" value="P:amino acid biosynthetic process"/>
    <property type="evidence" value="ECO:0007669"/>
    <property type="project" value="UniProtKB-KW"/>
</dbReference>
<dbReference type="GO" id="GO:0009073">
    <property type="term" value="P:aromatic amino acid family biosynthetic process"/>
    <property type="evidence" value="ECO:0007669"/>
    <property type="project" value="UniProtKB-KW"/>
</dbReference>
<dbReference type="GO" id="GO:0009423">
    <property type="term" value="P:chorismate biosynthetic process"/>
    <property type="evidence" value="ECO:0007669"/>
    <property type="project" value="UniProtKB-UniRule"/>
</dbReference>
<dbReference type="GO" id="GO:0019632">
    <property type="term" value="P:shikimate metabolic process"/>
    <property type="evidence" value="ECO:0007669"/>
    <property type="project" value="InterPro"/>
</dbReference>
<dbReference type="CDD" id="cd01065">
    <property type="entry name" value="NAD_bind_Shikimate_DH"/>
    <property type="match status" value="1"/>
</dbReference>
<dbReference type="FunFam" id="3.40.50.10860:FF:000006">
    <property type="entry name" value="Shikimate dehydrogenase (NADP(+))"/>
    <property type="match status" value="1"/>
</dbReference>
<dbReference type="Gene3D" id="3.40.50.10860">
    <property type="entry name" value="Leucine Dehydrogenase, chain A, domain 1"/>
    <property type="match status" value="1"/>
</dbReference>
<dbReference type="Gene3D" id="3.40.50.720">
    <property type="entry name" value="NAD(P)-binding Rossmann-like Domain"/>
    <property type="match status" value="1"/>
</dbReference>
<dbReference type="HAMAP" id="MF_00222">
    <property type="entry name" value="Shikimate_DH_AroE"/>
    <property type="match status" value="1"/>
</dbReference>
<dbReference type="InterPro" id="IPR046346">
    <property type="entry name" value="Aminoacid_DH-like_N_sf"/>
</dbReference>
<dbReference type="InterPro" id="IPR036291">
    <property type="entry name" value="NAD(P)-bd_dom_sf"/>
</dbReference>
<dbReference type="InterPro" id="IPR041121">
    <property type="entry name" value="SDH_C"/>
</dbReference>
<dbReference type="InterPro" id="IPR011342">
    <property type="entry name" value="Shikimate_DH"/>
</dbReference>
<dbReference type="InterPro" id="IPR013708">
    <property type="entry name" value="Shikimate_DH-bd_N"/>
</dbReference>
<dbReference type="InterPro" id="IPR022893">
    <property type="entry name" value="Shikimate_DH_fam"/>
</dbReference>
<dbReference type="InterPro" id="IPR006151">
    <property type="entry name" value="Shikm_DH/Glu-tRNA_Rdtase"/>
</dbReference>
<dbReference type="NCBIfam" id="TIGR00507">
    <property type="entry name" value="aroE"/>
    <property type="match status" value="1"/>
</dbReference>
<dbReference type="NCBIfam" id="NF001310">
    <property type="entry name" value="PRK00258.1-2"/>
    <property type="match status" value="1"/>
</dbReference>
<dbReference type="PANTHER" id="PTHR21089:SF1">
    <property type="entry name" value="BIFUNCTIONAL 3-DEHYDROQUINATE DEHYDRATASE_SHIKIMATE DEHYDROGENASE, CHLOROPLASTIC"/>
    <property type="match status" value="1"/>
</dbReference>
<dbReference type="PANTHER" id="PTHR21089">
    <property type="entry name" value="SHIKIMATE DEHYDROGENASE"/>
    <property type="match status" value="1"/>
</dbReference>
<dbReference type="Pfam" id="PF18317">
    <property type="entry name" value="SDH_C"/>
    <property type="match status" value="1"/>
</dbReference>
<dbReference type="Pfam" id="PF01488">
    <property type="entry name" value="Shikimate_DH"/>
    <property type="match status" value="1"/>
</dbReference>
<dbReference type="Pfam" id="PF08501">
    <property type="entry name" value="Shikimate_dh_N"/>
    <property type="match status" value="1"/>
</dbReference>
<dbReference type="SUPFAM" id="SSF53223">
    <property type="entry name" value="Aminoacid dehydrogenase-like, N-terminal domain"/>
    <property type="match status" value="1"/>
</dbReference>
<dbReference type="SUPFAM" id="SSF51735">
    <property type="entry name" value="NAD(P)-binding Rossmann-fold domains"/>
    <property type="match status" value="1"/>
</dbReference>
<proteinExistence type="inferred from homology"/>
<gene>
    <name evidence="1" type="primary">aroE</name>
    <name type="ordered locus">MADE_1000150</name>
</gene>
<protein>
    <recommendedName>
        <fullName evidence="1">Shikimate dehydrogenase (NADP(+))</fullName>
        <shortName evidence="1">SDH</shortName>
        <ecNumber evidence="1">1.1.1.25</ecNumber>
    </recommendedName>
</protein>
<organism>
    <name type="scientific">Alteromonas mediterranea (strain DSM 17117 / CIP 110805 / LMG 28347 / Deep ecotype)</name>
    <dbReference type="NCBI Taxonomy" id="1774373"/>
    <lineage>
        <taxon>Bacteria</taxon>
        <taxon>Pseudomonadati</taxon>
        <taxon>Pseudomonadota</taxon>
        <taxon>Gammaproteobacteria</taxon>
        <taxon>Alteromonadales</taxon>
        <taxon>Alteromonadaceae</taxon>
        <taxon>Alteromonas/Salinimonas group</taxon>
        <taxon>Alteromonas</taxon>
    </lineage>
</organism>
<reference key="1">
    <citation type="journal article" date="2008" name="ISME J.">
        <title>Comparative genomics of two ecotypes of the marine planktonic copiotroph Alteromonas macleodii suggests alternative lifestyles associated with different kinds of particulate organic matter.</title>
        <authorList>
            <person name="Ivars-Martinez E."/>
            <person name="Martin-Cuadrado A.-B."/>
            <person name="D'Auria G."/>
            <person name="Mira A."/>
            <person name="Ferriera S."/>
            <person name="Johnson J."/>
            <person name="Friedman R."/>
            <person name="Rodriguez-Valera F."/>
        </authorList>
    </citation>
    <scope>NUCLEOTIDE SEQUENCE [LARGE SCALE GENOMIC DNA]</scope>
    <source>
        <strain>DSM 17117 / CIP 110805 / LMG 28347 / Deep ecotype</strain>
    </source>
</reference>